<protein>
    <recommendedName>
        <fullName>Putative lipid kinase SAB0675c</fullName>
        <ecNumber>2.7.1.-</ecNumber>
    </recommendedName>
</protein>
<gene>
    <name type="ordered locus">SAB0675c</name>
</gene>
<comment type="function">
    <text evidence="1">May catalyze the ATP-dependent phosphorylation of lipids other than diacylglycerol (DAG).</text>
</comment>
<comment type="cofactor">
    <cofactor evidence="1">
        <name>Mg(2+)</name>
        <dbReference type="ChEBI" id="CHEBI:18420"/>
    </cofactor>
    <text evidence="1">Binds 1 Mg(2+) ion per subunit. This ion appears to have a structural role and is required for catalytic activity.</text>
</comment>
<comment type="similarity">
    <text evidence="3">Belongs to the diacylglycerol/lipid kinase family.</text>
</comment>
<keyword id="KW-0067">ATP-binding</keyword>
<keyword id="KW-0418">Kinase</keyword>
<keyword id="KW-0444">Lipid biosynthesis</keyword>
<keyword id="KW-0443">Lipid metabolism</keyword>
<keyword id="KW-0460">Magnesium</keyword>
<keyword id="KW-0479">Metal-binding</keyword>
<keyword id="KW-0547">Nucleotide-binding</keyword>
<keyword id="KW-0594">Phospholipid biosynthesis</keyword>
<keyword id="KW-1208">Phospholipid metabolism</keyword>
<keyword id="KW-0808">Transferase</keyword>
<name>Y675_STAAB</name>
<proteinExistence type="inferred from homology"/>
<evidence type="ECO:0000250" key="1"/>
<evidence type="ECO:0000255" key="2">
    <source>
        <dbReference type="PROSITE-ProRule" id="PRU00783"/>
    </source>
</evidence>
<evidence type="ECO:0000305" key="3"/>
<accession>Q2YSK5</accession>
<feature type="chain" id="PRO_0000386510" description="Putative lipid kinase SAB0675c">
    <location>
        <begin position="1"/>
        <end position="305"/>
    </location>
</feature>
<feature type="domain" description="DAGKc" evidence="2">
    <location>
        <begin position="3"/>
        <end position="139"/>
    </location>
</feature>
<feature type="active site" description="Proton acceptor" evidence="1">
    <location>
        <position position="281"/>
    </location>
</feature>
<feature type="binding site" evidence="2">
    <location>
        <position position="44"/>
    </location>
    <ligand>
        <name>ATP</name>
        <dbReference type="ChEBI" id="CHEBI:30616"/>
    </ligand>
</feature>
<feature type="binding site" evidence="2">
    <location>
        <begin position="74"/>
        <end position="80"/>
    </location>
    <ligand>
        <name>ATP</name>
        <dbReference type="ChEBI" id="CHEBI:30616"/>
    </ligand>
</feature>
<feature type="binding site" evidence="2">
    <location>
        <position position="101"/>
    </location>
    <ligand>
        <name>ATP</name>
        <dbReference type="ChEBI" id="CHEBI:30616"/>
    </ligand>
</feature>
<feature type="binding site" evidence="1">
    <location>
        <position position="220"/>
    </location>
    <ligand>
        <name>Mg(2+)</name>
        <dbReference type="ChEBI" id="CHEBI:18420"/>
    </ligand>
</feature>
<feature type="binding site" evidence="1">
    <location>
        <position position="223"/>
    </location>
    <ligand>
        <name>Mg(2+)</name>
        <dbReference type="ChEBI" id="CHEBI:18420"/>
    </ligand>
</feature>
<feature type="binding site" evidence="1">
    <location>
        <position position="225"/>
    </location>
    <ligand>
        <name>Mg(2+)</name>
        <dbReference type="ChEBI" id="CHEBI:18420"/>
    </ligand>
</feature>
<reference key="1">
    <citation type="journal article" date="2007" name="PLoS ONE">
        <title>Molecular correlates of host specialization in Staphylococcus aureus.</title>
        <authorList>
            <person name="Herron-Olson L."/>
            <person name="Fitzgerald J.R."/>
            <person name="Musser J.M."/>
            <person name="Kapur V."/>
        </authorList>
    </citation>
    <scope>NUCLEOTIDE SEQUENCE [LARGE SCALE GENOMIC DNA]</scope>
    <source>
        <strain>bovine RF122 / ET3-1</strain>
    </source>
</reference>
<organism>
    <name type="scientific">Staphylococcus aureus (strain bovine RF122 / ET3-1)</name>
    <dbReference type="NCBI Taxonomy" id="273036"/>
    <lineage>
        <taxon>Bacteria</taxon>
        <taxon>Bacillati</taxon>
        <taxon>Bacillota</taxon>
        <taxon>Bacilli</taxon>
        <taxon>Bacillales</taxon>
        <taxon>Staphylococcaceae</taxon>
        <taxon>Staphylococcus</taxon>
    </lineage>
</organism>
<dbReference type="EC" id="2.7.1.-"/>
<dbReference type="EMBL" id="AJ938182">
    <property type="protein sequence ID" value="CAI80363.1"/>
    <property type="molecule type" value="Genomic_DNA"/>
</dbReference>
<dbReference type="RefSeq" id="WP_000429019.1">
    <property type="nucleotide sequence ID" value="NC_007622.1"/>
</dbReference>
<dbReference type="SMR" id="Q2YSK5"/>
<dbReference type="KEGG" id="sab:SAB0675c"/>
<dbReference type="HOGENOM" id="CLU_045532_1_0_9"/>
<dbReference type="GO" id="GO:0005886">
    <property type="term" value="C:plasma membrane"/>
    <property type="evidence" value="ECO:0007669"/>
    <property type="project" value="TreeGrafter"/>
</dbReference>
<dbReference type="GO" id="GO:0005524">
    <property type="term" value="F:ATP binding"/>
    <property type="evidence" value="ECO:0007669"/>
    <property type="project" value="UniProtKB-KW"/>
</dbReference>
<dbReference type="GO" id="GO:0004143">
    <property type="term" value="F:ATP-dependent diacylglycerol kinase activity"/>
    <property type="evidence" value="ECO:0007669"/>
    <property type="project" value="TreeGrafter"/>
</dbReference>
<dbReference type="GO" id="GO:0046872">
    <property type="term" value="F:metal ion binding"/>
    <property type="evidence" value="ECO:0007669"/>
    <property type="project" value="UniProtKB-KW"/>
</dbReference>
<dbReference type="GO" id="GO:0008654">
    <property type="term" value="P:phospholipid biosynthetic process"/>
    <property type="evidence" value="ECO:0007669"/>
    <property type="project" value="UniProtKB-KW"/>
</dbReference>
<dbReference type="Gene3D" id="2.60.200.40">
    <property type="match status" value="1"/>
</dbReference>
<dbReference type="Gene3D" id="3.40.50.10330">
    <property type="entry name" value="Probable inorganic polyphosphate/atp-NAD kinase, domain 1"/>
    <property type="match status" value="1"/>
</dbReference>
<dbReference type="InterPro" id="IPR017438">
    <property type="entry name" value="ATP-NAD_kinase_N"/>
</dbReference>
<dbReference type="InterPro" id="IPR005218">
    <property type="entry name" value="Diacylglycerol/lipid_kinase"/>
</dbReference>
<dbReference type="InterPro" id="IPR001206">
    <property type="entry name" value="Diacylglycerol_kinase_cat_dom"/>
</dbReference>
<dbReference type="InterPro" id="IPR050187">
    <property type="entry name" value="Lipid_Phosphate_FormReg"/>
</dbReference>
<dbReference type="InterPro" id="IPR016064">
    <property type="entry name" value="NAD/diacylglycerol_kinase_sf"/>
</dbReference>
<dbReference type="InterPro" id="IPR045540">
    <property type="entry name" value="YegS/DAGK_C"/>
</dbReference>
<dbReference type="NCBIfam" id="TIGR00147">
    <property type="entry name" value="YegS/Rv2252/BmrU family lipid kinase"/>
    <property type="match status" value="1"/>
</dbReference>
<dbReference type="PANTHER" id="PTHR12358:SF106">
    <property type="entry name" value="LIPID KINASE YEGS"/>
    <property type="match status" value="1"/>
</dbReference>
<dbReference type="PANTHER" id="PTHR12358">
    <property type="entry name" value="SPHINGOSINE KINASE"/>
    <property type="match status" value="1"/>
</dbReference>
<dbReference type="Pfam" id="PF00781">
    <property type="entry name" value="DAGK_cat"/>
    <property type="match status" value="1"/>
</dbReference>
<dbReference type="Pfam" id="PF19279">
    <property type="entry name" value="YegS_C"/>
    <property type="match status" value="1"/>
</dbReference>
<dbReference type="SMART" id="SM00046">
    <property type="entry name" value="DAGKc"/>
    <property type="match status" value="1"/>
</dbReference>
<dbReference type="SUPFAM" id="SSF111331">
    <property type="entry name" value="NAD kinase/diacylglycerol kinase-like"/>
    <property type="match status" value="1"/>
</dbReference>
<dbReference type="PROSITE" id="PS50146">
    <property type="entry name" value="DAGK"/>
    <property type="match status" value="1"/>
</dbReference>
<sequence>MENKYTHGVLFYHEHSGLKNINQGIGEVTTALSSICKHLSIQLSENEGDIIKYCQEIKTKNYAKDVDILFILGGDGTVNELINGVMTNDLQLPIGILPGGTFNDFTKTLNIAPNHKQASEQMISAQVGTYDVIKINNQYALNFVGLGLIVQNAENVQDGSKDIFGKLSYIGSTVKTLLNPTQFNYQLSIDDKTYSGETSMILSANGPFIGGSRIPLTDLSPQDGELNTFIFNEQSFSILNDIFKKRDSMNWNEITQGIEHIPGKKISLTTDPAMKVDIDGEISLETPIDIEVIPNAIQLLTVNDL</sequence>